<protein>
    <recommendedName>
        <fullName>Chitooligosaccharide deacetylase</fullName>
        <ecNumber>3.5.1.-</ecNumber>
    </recommendedName>
    <alternativeName>
        <fullName>Nodulation protein B</fullName>
    </alternativeName>
</protein>
<feature type="chain" id="PRO_0000172753" description="Chitooligosaccharide deacetylase">
    <location>
        <begin position="1"/>
        <end position="215"/>
    </location>
</feature>
<feature type="domain" description="NodB homology" evidence="2">
    <location>
        <begin position="20"/>
        <end position="211"/>
    </location>
</feature>
<feature type="active site" description="Proton acceptor" evidence="1">
    <location>
        <position position="27"/>
    </location>
</feature>
<feature type="active site" description="Proton donor" evidence="1">
    <location>
        <position position="172"/>
    </location>
</feature>
<feature type="binding site" evidence="1">
    <location>
        <position position="78"/>
    </location>
    <ligand>
        <name>a divalent metal cation</name>
        <dbReference type="ChEBI" id="CHEBI:60240"/>
    </ligand>
</feature>
<feature type="binding site" evidence="1">
    <location>
        <position position="82"/>
    </location>
    <ligand>
        <name>a divalent metal cation</name>
        <dbReference type="ChEBI" id="CHEBI:60240"/>
    </ligand>
</feature>
<feature type="site" description="Raises pKa of active site His" evidence="1">
    <location>
        <position position="146"/>
    </location>
</feature>
<dbReference type="EC" id="3.5.1.-"/>
<dbReference type="EMBL" id="X03721">
    <property type="protein sequence ID" value="CAA27352.1"/>
    <property type="molecule type" value="Genomic_DNA"/>
</dbReference>
<dbReference type="PIR" id="B23766">
    <property type="entry name" value="B23766"/>
</dbReference>
<dbReference type="SMR" id="P04676"/>
<dbReference type="GO" id="GO:0005737">
    <property type="term" value="C:cytoplasm"/>
    <property type="evidence" value="ECO:0007669"/>
    <property type="project" value="UniProtKB-SubCell"/>
</dbReference>
<dbReference type="GO" id="GO:0016020">
    <property type="term" value="C:membrane"/>
    <property type="evidence" value="ECO:0007669"/>
    <property type="project" value="TreeGrafter"/>
</dbReference>
<dbReference type="GO" id="GO:0016810">
    <property type="term" value="F:hydrolase activity, acting on carbon-nitrogen (but not peptide) bonds"/>
    <property type="evidence" value="ECO:0007669"/>
    <property type="project" value="InterPro"/>
</dbReference>
<dbReference type="GO" id="GO:0046872">
    <property type="term" value="F:metal ion binding"/>
    <property type="evidence" value="ECO:0007669"/>
    <property type="project" value="UniProtKB-KW"/>
</dbReference>
<dbReference type="GO" id="GO:0005975">
    <property type="term" value="P:carbohydrate metabolic process"/>
    <property type="evidence" value="ECO:0007669"/>
    <property type="project" value="InterPro"/>
</dbReference>
<dbReference type="Gene3D" id="3.20.20.370">
    <property type="entry name" value="Glycoside hydrolase/deacetylase"/>
    <property type="match status" value="1"/>
</dbReference>
<dbReference type="InterPro" id="IPR011330">
    <property type="entry name" value="Glyco_hydro/deAcase_b/a-brl"/>
</dbReference>
<dbReference type="InterPro" id="IPR002509">
    <property type="entry name" value="NODB_dom"/>
</dbReference>
<dbReference type="InterPro" id="IPR026402">
    <property type="entry name" value="Nodulat_NodB"/>
</dbReference>
<dbReference type="InterPro" id="IPR050248">
    <property type="entry name" value="Polysacc_deacetylase_ArnD"/>
</dbReference>
<dbReference type="NCBIfam" id="TIGR04243">
    <property type="entry name" value="nodulat_NodB"/>
    <property type="match status" value="1"/>
</dbReference>
<dbReference type="PANTHER" id="PTHR10587:SF133">
    <property type="entry name" value="CHITIN DEACETYLASE 1-RELATED"/>
    <property type="match status" value="1"/>
</dbReference>
<dbReference type="PANTHER" id="PTHR10587">
    <property type="entry name" value="GLYCOSYL TRANSFERASE-RELATED"/>
    <property type="match status" value="1"/>
</dbReference>
<dbReference type="Pfam" id="PF01522">
    <property type="entry name" value="Polysacc_deac_1"/>
    <property type="match status" value="1"/>
</dbReference>
<dbReference type="SUPFAM" id="SSF88713">
    <property type="entry name" value="Glycoside hydrolase/deacetylase"/>
    <property type="match status" value="1"/>
</dbReference>
<dbReference type="PROSITE" id="PS51677">
    <property type="entry name" value="NODB"/>
    <property type="match status" value="1"/>
</dbReference>
<organism>
    <name type="scientific">Rhizobium leguminosarum bv. trifolii</name>
    <dbReference type="NCBI Taxonomy" id="386"/>
    <lineage>
        <taxon>Bacteria</taxon>
        <taxon>Pseudomonadati</taxon>
        <taxon>Pseudomonadota</taxon>
        <taxon>Alphaproteobacteria</taxon>
        <taxon>Hyphomicrobiales</taxon>
        <taxon>Rhizobiaceae</taxon>
        <taxon>Rhizobium/Agrobacterium group</taxon>
        <taxon>Rhizobium</taxon>
    </lineage>
</organism>
<name>NODB_RHILT</name>
<reference key="1">
    <citation type="journal article" date="1986" name="Nucleic Acids Res.">
        <title>DNA sequence of Rhizobium trifolii nodulation genes reveals a reiterated and potentially regulatory sequence preceding nodABC and nodFE.</title>
        <authorList>
            <person name="Schofield P.R."/>
            <person name="Watson J.M."/>
        </authorList>
    </citation>
    <scope>NUCLEOTIDE SEQUENCE [GENOMIC DNA]</scope>
    <source>
        <strain>ANU 843</strain>
    </source>
</reference>
<keyword id="KW-0963">Cytoplasm</keyword>
<keyword id="KW-0378">Hydrolase</keyword>
<keyword id="KW-0479">Metal-binding</keyword>
<keyword id="KW-0536">Nodulation</keyword>
<keyword id="KW-0614">Plasmid</keyword>
<gene>
    <name type="primary">nodB</name>
</gene>
<sequence>MKRRAYISEVPFDEAGSDDRNIYLTFDDGPNPHCTGQILDVLAEHRVPATFFVLGGHVKDHPDLVRRVAAEGHLVANHTMTHPDLTACDSEAIEREIKETNEAIVSACPQVAVQHIRRYGAWNADVLSRSMNAGLRPVHWSIDPRDWSRPGVDSIVDAVLAAARPGAIVLLHDGCPPDEIGNCKLTGLRDQTLSALLAIIPALHSRGFSLRSLPQ</sequence>
<evidence type="ECO:0000250" key="1"/>
<evidence type="ECO:0000255" key="2">
    <source>
        <dbReference type="PROSITE-ProRule" id="PRU01014"/>
    </source>
</evidence>
<evidence type="ECO:0000305" key="3"/>
<geneLocation type="plasmid">
    <name>sym pRtr843e</name>
</geneLocation>
<accession>P04676</accession>
<proteinExistence type="inferred from homology"/>
<comment type="function">
    <text>Is involved in generating a small heat-stable compound (Nod), an acylated oligomer of N-acetylglucosamine, that stimulates mitosis in various plant protoplasts.</text>
</comment>
<comment type="subcellular location">
    <subcellularLocation>
        <location>Cytoplasm</location>
    </subcellularLocation>
</comment>
<comment type="similarity">
    <text evidence="3">Belongs to the polysaccharide deacetylase family.</text>
</comment>